<proteinExistence type="evidence at protein level"/>
<evidence type="ECO:0000255" key="1">
    <source>
        <dbReference type="PROSITE-ProRule" id="PRU00280"/>
    </source>
</evidence>
<evidence type="ECO:0000256" key="2">
    <source>
        <dbReference type="SAM" id="MobiDB-lite"/>
    </source>
</evidence>
<evidence type="ECO:0000269" key="3">
    <source>
    </source>
</evidence>
<evidence type="ECO:0000269" key="4">
    <source>
    </source>
</evidence>
<evidence type="ECO:0000269" key="5">
    <source>
    </source>
</evidence>
<evidence type="ECO:0000303" key="6">
    <source>
    </source>
</evidence>
<evidence type="ECO:0000303" key="7">
    <source>
    </source>
</evidence>
<evidence type="ECO:0000303" key="8">
    <source>
    </source>
</evidence>
<evidence type="ECO:0000305" key="9"/>
<evidence type="ECO:0000305" key="10">
    <source>
    </source>
</evidence>
<evidence type="ECO:0000312" key="11">
    <source>
        <dbReference type="Araport" id="AT5G02600"/>
    </source>
</evidence>
<evidence type="ECO:0000312" key="12">
    <source>
        <dbReference type="EMBL" id="CAB85997.1"/>
    </source>
</evidence>
<organism>
    <name type="scientific">Arabidopsis thaliana</name>
    <name type="common">Mouse-ear cress</name>
    <dbReference type="NCBI Taxonomy" id="3702"/>
    <lineage>
        <taxon>Eukaryota</taxon>
        <taxon>Viridiplantae</taxon>
        <taxon>Streptophyta</taxon>
        <taxon>Embryophyta</taxon>
        <taxon>Tracheophyta</taxon>
        <taxon>Spermatophyta</taxon>
        <taxon>Magnoliopsida</taxon>
        <taxon>eudicotyledons</taxon>
        <taxon>Gunneridae</taxon>
        <taxon>Pentapetalae</taxon>
        <taxon>rosids</taxon>
        <taxon>malvids</taxon>
        <taxon>Brassicales</taxon>
        <taxon>Brassicaceae</taxon>
        <taxon>Camelineae</taxon>
        <taxon>Arabidopsis</taxon>
    </lineage>
</organism>
<gene>
    <name evidence="7" type="primary">NAKR1</name>
    <name evidence="8" type="synonym">HPP02</name>
    <name evidence="6" type="synonym">NPCC6</name>
    <name evidence="11" type="ordered locus">At5g02600</name>
    <name evidence="12" type="ORF">T22P11_190</name>
</gene>
<name>NAKR1_ARATH</name>
<dbReference type="EMBL" id="AL162971">
    <property type="protein sequence ID" value="CAB85997.1"/>
    <property type="status" value="ALT_INIT"/>
    <property type="molecule type" value="Genomic_DNA"/>
</dbReference>
<dbReference type="EMBL" id="CP002688">
    <property type="protein sequence ID" value="AED90495.1"/>
    <property type="molecule type" value="Genomic_DNA"/>
</dbReference>
<dbReference type="EMBL" id="CP002688">
    <property type="protein sequence ID" value="AED90496.1"/>
    <property type="molecule type" value="Genomic_DNA"/>
</dbReference>
<dbReference type="EMBL" id="AK117227">
    <property type="protein sequence ID" value="BAC41903.1"/>
    <property type="molecule type" value="mRNA"/>
</dbReference>
<dbReference type="EMBL" id="BT008344">
    <property type="protein sequence ID" value="AAP37703.1"/>
    <property type="molecule type" value="mRNA"/>
</dbReference>
<dbReference type="EMBL" id="AK221722">
    <property type="protein sequence ID" value="BAD93718.1"/>
    <property type="molecule type" value="mRNA"/>
</dbReference>
<dbReference type="EMBL" id="AY085833">
    <property type="protein sequence ID" value="AAM63048.1"/>
    <property type="molecule type" value="mRNA"/>
</dbReference>
<dbReference type="PIR" id="T48281">
    <property type="entry name" value="T48281"/>
</dbReference>
<dbReference type="RefSeq" id="NP_568105.1">
    <property type="nucleotide sequence ID" value="NM_120338.4"/>
</dbReference>
<dbReference type="RefSeq" id="NP_974723.1">
    <property type="nucleotide sequence ID" value="NM_202994.3"/>
</dbReference>
<dbReference type="SMR" id="Q8LDS4"/>
<dbReference type="FunCoup" id="Q8LDS4">
    <property type="interactions" value="39"/>
</dbReference>
<dbReference type="STRING" id="3702.Q8LDS4"/>
<dbReference type="iPTMnet" id="Q8LDS4"/>
<dbReference type="PaxDb" id="3702-AT5G02600.1"/>
<dbReference type="ProteomicsDB" id="251083"/>
<dbReference type="EnsemblPlants" id="AT5G02600.1">
    <property type="protein sequence ID" value="AT5G02600.1"/>
    <property type="gene ID" value="AT5G02600"/>
</dbReference>
<dbReference type="EnsemblPlants" id="AT5G02600.2">
    <property type="protein sequence ID" value="AT5G02600.2"/>
    <property type="gene ID" value="AT5G02600"/>
</dbReference>
<dbReference type="GeneID" id="831874"/>
<dbReference type="Gramene" id="AT5G02600.1">
    <property type="protein sequence ID" value="AT5G02600.1"/>
    <property type="gene ID" value="AT5G02600"/>
</dbReference>
<dbReference type="Gramene" id="AT5G02600.2">
    <property type="protein sequence ID" value="AT5G02600.2"/>
    <property type="gene ID" value="AT5G02600"/>
</dbReference>
<dbReference type="KEGG" id="ath:AT5G02600"/>
<dbReference type="Araport" id="AT5G02600"/>
<dbReference type="TAIR" id="AT5G02600">
    <property type="gene designation" value="NAKR1"/>
</dbReference>
<dbReference type="eggNOG" id="KOG1603">
    <property type="taxonomic scope" value="Eukaryota"/>
</dbReference>
<dbReference type="HOGENOM" id="CLU_071922_0_0_1"/>
<dbReference type="InParanoid" id="Q8LDS4"/>
<dbReference type="PhylomeDB" id="Q8LDS4"/>
<dbReference type="PRO" id="PR:Q8LDS4"/>
<dbReference type="Proteomes" id="UP000006548">
    <property type="component" value="Chromosome 5"/>
</dbReference>
<dbReference type="ExpressionAtlas" id="Q8LDS4">
    <property type="expression patterns" value="baseline and differential"/>
</dbReference>
<dbReference type="GO" id="GO:0005737">
    <property type="term" value="C:cytoplasm"/>
    <property type="evidence" value="ECO:0000314"/>
    <property type="project" value="TAIR"/>
</dbReference>
<dbReference type="GO" id="GO:0005783">
    <property type="term" value="C:endoplasmic reticulum"/>
    <property type="evidence" value="ECO:0007669"/>
    <property type="project" value="UniProtKB-SubCell"/>
</dbReference>
<dbReference type="GO" id="GO:0005634">
    <property type="term" value="C:nucleus"/>
    <property type="evidence" value="ECO:0000314"/>
    <property type="project" value="TAIR"/>
</dbReference>
<dbReference type="GO" id="GO:0046872">
    <property type="term" value="F:metal ion binding"/>
    <property type="evidence" value="ECO:0000314"/>
    <property type="project" value="TAIR"/>
</dbReference>
<dbReference type="GO" id="GO:0009908">
    <property type="term" value="P:flower development"/>
    <property type="evidence" value="ECO:0000315"/>
    <property type="project" value="TAIR"/>
</dbReference>
<dbReference type="GO" id="GO:0010233">
    <property type="term" value="P:phloem transport"/>
    <property type="evidence" value="ECO:0000315"/>
    <property type="project" value="TAIR"/>
</dbReference>
<dbReference type="GO" id="GO:0010015">
    <property type="term" value="P:root morphogenesis"/>
    <property type="evidence" value="ECO:0000315"/>
    <property type="project" value="TAIR"/>
</dbReference>
<dbReference type="GO" id="GO:0055078">
    <property type="term" value="P:sodium ion homeostasis"/>
    <property type="evidence" value="ECO:0000315"/>
    <property type="project" value="TAIR"/>
</dbReference>
<dbReference type="CDD" id="cd00371">
    <property type="entry name" value="HMA"/>
    <property type="match status" value="1"/>
</dbReference>
<dbReference type="FunFam" id="3.30.70.100:FF:000008">
    <property type="entry name" value="Copper transport protein ATOX1"/>
    <property type="match status" value="1"/>
</dbReference>
<dbReference type="Gene3D" id="3.30.70.100">
    <property type="match status" value="1"/>
</dbReference>
<dbReference type="InterPro" id="IPR006121">
    <property type="entry name" value="HMA_dom"/>
</dbReference>
<dbReference type="InterPro" id="IPR036163">
    <property type="entry name" value="HMA_dom_sf"/>
</dbReference>
<dbReference type="InterPro" id="IPR044526">
    <property type="entry name" value="NAKR1-3"/>
</dbReference>
<dbReference type="PANTHER" id="PTHR46119">
    <property type="entry name" value="OS08G0405700 PROTEIN"/>
    <property type="match status" value="1"/>
</dbReference>
<dbReference type="PANTHER" id="PTHR46119:SF27">
    <property type="entry name" value="PROTEIN SODIUM POTASSIUM ROOT DEFECTIVE 1"/>
    <property type="match status" value="1"/>
</dbReference>
<dbReference type="Pfam" id="PF00403">
    <property type="entry name" value="HMA"/>
    <property type="match status" value="1"/>
</dbReference>
<dbReference type="SUPFAM" id="SSF55008">
    <property type="entry name" value="HMA, heavy metal-associated domain"/>
    <property type="match status" value="1"/>
</dbReference>
<dbReference type="PROSITE" id="PS50846">
    <property type="entry name" value="HMA_2"/>
    <property type="match status" value="1"/>
</dbReference>
<accession>Q8LDS4</accession>
<accession>Q9LZ42</accession>
<feature type="chain" id="PRO_0000437273" description="Protein SODIUM POTASSIUM ROOT DEFECTIVE 1">
    <location>
        <begin position="1"/>
        <end position="319"/>
    </location>
</feature>
<feature type="domain" description="HMA" evidence="1">
    <location>
        <begin position="249"/>
        <end position="315"/>
    </location>
</feature>
<feature type="region of interest" description="Disordered" evidence="2">
    <location>
        <begin position="1"/>
        <end position="113"/>
    </location>
</feature>
<feature type="region of interest" description="Disordered" evidence="2">
    <location>
        <begin position="191"/>
        <end position="248"/>
    </location>
</feature>
<feature type="compositionally biased region" description="Polar residues" evidence="2">
    <location>
        <begin position="1"/>
        <end position="13"/>
    </location>
</feature>
<feature type="compositionally biased region" description="Low complexity" evidence="2">
    <location>
        <begin position="14"/>
        <end position="27"/>
    </location>
</feature>
<feature type="compositionally biased region" description="Basic and acidic residues" evidence="2">
    <location>
        <begin position="36"/>
        <end position="49"/>
    </location>
</feature>
<feature type="compositionally biased region" description="Low complexity" evidence="2">
    <location>
        <begin position="58"/>
        <end position="67"/>
    </location>
</feature>
<feature type="compositionally biased region" description="Polar residues" evidence="2">
    <location>
        <begin position="104"/>
        <end position="113"/>
    </location>
</feature>
<feature type="compositionally biased region" description="Polar residues" evidence="2">
    <location>
        <begin position="200"/>
        <end position="210"/>
    </location>
</feature>
<feature type="compositionally biased region" description="Pro residues" evidence="2">
    <location>
        <begin position="224"/>
        <end position="242"/>
    </location>
</feature>
<feature type="binding site" evidence="1 10">
    <location>
        <position position="260"/>
    </location>
    <ligand>
        <name>Zn(2+)</name>
        <dbReference type="ChEBI" id="CHEBI:29105"/>
    </ligand>
</feature>
<feature type="binding site" evidence="1 10">
    <location>
        <position position="263"/>
    </location>
    <ligand>
        <name>Zn(2+)</name>
        <dbReference type="ChEBI" id="CHEBI:29105"/>
    </ligand>
</feature>
<feature type="mutagenesis site" description="Loss of metal binding; when associated with G-263." evidence="4">
    <original>C</original>
    <variation>G</variation>
    <location>
        <position position="260"/>
    </location>
</feature>
<feature type="mutagenesis site" description="Loss of metal binding; when associated with G-260." evidence="4">
    <original>C</original>
    <variation>G</variation>
    <location>
        <position position="263"/>
    </location>
</feature>
<sequence length="319" mass="34509">MLCASQASTTTLCSTMDQTSQPSSSSSATIRLGGRAIDRHNPIIRDGRRLTPPPSPNLNPSSSSSSTYHTPLMTRLGLESSEQKRLAKRKSKKGDSDVGKSPVSCFSSDTPQGSSRYLLSNPVFFDGFVDSDPIPIPIDEPEITKADDLNNFHEDRLIINASKYLSTSASFLEKKQPDFFEGFLDYEPVLSPDNPFSEPTKASPTASLSSLEDKDVSSPDFKFSPPPPPPPSPPQSSPPSPPEKNSSSDQVVVLRVSLHCKGCAGKVKKHLSKLKGVTSYNIDFAAKKVTVTGDVTPLTVLASISKVKNAQFWPEIIQK</sequence>
<reference key="1">
    <citation type="journal article" date="2000" name="Nature">
        <title>Sequence and analysis of chromosome 5 of the plant Arabidopsis thaliana.</title>
        <authorList>
            <person name="Tabata S."/>
            <person name="Kaneko T."/>
            <person name="Nakamura Y."/>
            <person name="Kotani H."/>
            <person name="Kato T."/>
            <person name="Asamizu E."/>
            <person name="Miyajima N."/>
            <person name="Sasamoto S."/>
            <person name="Kimura T."/>
            <person name="Hosouchi T."/>
            <person name="Kawashima K."/>
            <person name="Kohara M."/>
            <person name="Matsumoto M."/>
            <person name="Matsuno A."/>
            <person name="Muraki A."/>
            <person name="Nakayama S."/>
            <person name="Nakazaki N."/>
            <person name="Naruo K."/>
            <person name="Okumura S."/>
            <person name="Shinpo S."/>
            <person name="Takeuchi C."/>
            <person name="Wada T."/>
            <person name="Watanabe A."/>
            <person name="Yamada M."/>
            <person name="Yasuda M."/>
            <person name="Sato S."/>
            <person name="de la Bastide M."/>
            <person name="Huang E."/>
            <person name="Spiegel L."/>
            <person name="Gnoj L."/>
            <person name="O'Shaughnessy A."/>
            <person name="Preston R."/>
            <person name="Habermann K."/>
            <person name="Murray J."/>
            <person name="Johnson D."/>
            <person name="Rohlfing T."/>
            <person name="Nelson J."/>
            <person name="Stoneking T."/>
            <person name="Pepin K."/>
            <person name="Spieth J."/>
            <person name="Sekhon M."/>
            <person name="Armstrong J."/>
            <person name="Becker M."/>
            <person name="Belter E."/>
            <person name="Cordum H."/>
            <person name="Cordes M."/>
            <person name="Courtney L."/>
            <person name="Courtney W."/>
            <person name="Dante M."/>
            <person name="Du H."/>
            <person name="Edwards J."/>
            <person name="Fryman J."/>
            <person name="Haakensen B."/>
            <person name="Lamar E."/>
            <person name="Latreille P."/>
            <person name="Leonard S."/>
            <person name="Meyer R."/>
            <person name="Mulvaney E."/>
            <person name="Ozersky P."/>
            <person name="Riley A."/>
            <person name="Strowmatt C."/>
            <person name="Wagner-McPherson C."/>
            <person name="Wollam A."/>
            <person name="Yoakum M."/>
            <person name="Bell M."/>
            <person name="Dedhia N."/>
            <person name="Parnell L."/>
            <person name="Shah R."/>
            <person name="Rodriguez M."/>
            <person name="Hoon See L."/>
            <person name="Vil D."/>
            <person name="Baker J."/>
            <person name="Kirchoff K."/>
            <person name="Toth K."/>
            <person name="King L."/>
            <person name="Bahret A."/>
            <person name="Miller B."/>
            <person name="Marra M.A."/>
            <person name="Martienssen R."/>
            <person name="McCombie W.R."/>
            <person name="Wilson R.K."/>
            <person name="Murphy G."/>
            <person name="Bancroft I."/>
            <person name="Volckaert G."/>
            <person name="Wambutt R."/>
            <person name="Duesterhoeft A."/>
            <person name="Stiekema W."/>
            <person name="Pohl T."/>
            <person name="Entian K.-D."/>
            <person name="Terryn N."/>
            <person name="Hartley N."/>
            <person name="Bent E."/>
            <person name="Johnson S."/>
            <person name="Langham S.-A."/>
            <person name="McCullagh B."/>
            <person name="Robben J."/>
            <person name="Grymonprez B."/>
            <person name="Zimmermann W."/>
            <person name="Ramsperger U."/>
            <person name="Wedler H."/>
            <person name="Balke K."/>
            <person name="Wedler E."/>
            <person name="Peters S."/>
            <person name="van Staveren M."/>
            <person name="Dirkse W."/>
            <person name="Mooijman P."/>
            <person name="Klein Lankhorst R."/>
            <person name="Weitzenegger T."/>
            <person name="Bothe G."/>
            <person name="Rose M."/>
            <person name="Hauf J."/>
            <person name="Berneiser S."/>
            <person name="Hempel S."/>
            <person name="Feldpausch M."/>
            <person name="Lamberth S."/>
            <person name="Villarroel R."/>
            <person name="Gielen J."/>
            <person name="Ardiles W."/>
            <person name="Bents O."/>
            <person name="Lemcke K."/>
            <person name="Kolesov G."/>
            <person name="Mayer K.F.X."/>
            <person name="Rudd S."/>
            <person name="Schoof H."/>
            <person name="Schueller C."/>
            <person name="Zaccaria P."/>
            <person name="Mewes H.-W."/>
            <person name="Bevan M."/>
            <person name="Fransz P.F."/>
        </authorList>
    </citation>
    <scope>NUCLEOTIDE SEQUENCE [LARGE SCALE GENOMIC DNA]</scope>
    <source>
        <strain>cv. Columbia</strain>
    </source>
</reference>
<reference key="2">
    <citation type="journal article" date="2017" name="Plant J.">
        <title>Araport11: a complete reannotation of the Arabidopsis thaliana reference genome.</title>
        <authorList>
            <person name="Cheng C.Y."/>
            <person name="Krishnakumar V."/>
            <person name="Chan A.P."/>
            <person name="Thibaud-Nissen F."/>
            <person name="Schobel S."/>
            <person name="Town C.D."/>
        </authorList>
    </citation>
    <scope>GENOME REANNOTATION</scope>
    <source>
        <strain>cv. Columbia</strain>
    </source>
</reference>
<reference key="3">
    <citation type="journal article" date="2002" name="Science">
        <title>Functional annotation of a full-length Arabidopsis cDNA collection.</title>
        <authorList>
            <person name="Seki M."/>
            <person name="Narusaka M."/>
            <person name="Kamiya A."/>
            <person name="Ishida J."/>
            <person name="Satou M."/>
            <person name="Sakurai T."/>
            <person name="Nakajima M."/>
            <person name="Enju A."/>
            <person name="Akiyama K."/>
            <person name="Oono Y."/>
            <person name="Muramatsu M."/>
            <person name="Hayashizaki Y."/>
            <person name="Kawai J."/>
            <person name="Carninci P."/>
            <person name="Itoh M."/>
            <person name="Ishii Y."/>
            <person name="Arakawa T."/>
            <person name="Shibata K."/>
            <person name="Shinagawa A."/>
            <person name="Shinozaki K."/>
        </authorList>
    </citation>
    <scope>NUCLEOTIDE SEQUENCE [LARGE SCALE MRNA]</scope>
    <source>
        <strain>cv. Columbia</strain>
    </source>
</reference>
<reference key="4">
    <citation type="journal article" date="2003" name="Science">
        <title>Empirical analysis of transcriptional activity in the Arabidopsis genome.</title>
        <authorList>
            <person name="Yamada K."/>
            <person name="Lim J."/>
            <person name="Dale J.M."/>
            <person name="Chen H."/>
            <person name="Shinn P."/>
            <person name="Palm C.J."/>
            <person name="Southwick A.M."/>
            <person name="Wu H.C."/>
            <person name="Kim C.J."/>
            <person name="Nguyen M."/>
            <person name="Pham P.K."/>
            <person name="Cheuk R.F."/>
            <person name="Karlin-Newmann G."/>
            <person name="Liu S.X."/>
            <person name="Lam B."/>
            <person name="Sakano H."/>
            <person name="Wu T."/>
            <person name="Yu G."/>
            <person name="Miranda M."/>
            <person name="Quach H.L."/>
            <person name="Tripp M."/>
            <person name="Chang C.H."/>
            <person name="Lee J.M."/>
            <person name="Toriumi M.J."/>
            <person name="Chan M.M."/>
            <person name="Tang C.C."/>
            <person name="Onodera C.S."/>
            <person name="Deng J.M."/>
            <person name="Akiyama K."/>
            <person name="Ansari Y."/>
            <person name="Arakawa T."/>
            <person name="Banh J."/>
            <person name="Banno F."/>
            <person name="Bowser L."/>
            <person name="Brooks S.Y."/>
            <person name="Carninci P."/>
            <person name="Chao Q."/>
            <person name="Choy N."/>
            <person name="Enju A."/>
            <person name="Goldsmith A.D."/>
            <person name="Gurjal M."/>
            <person name="Hansen N.F."/>
            <person name="Hayashizaki Y."/>
            <person name="Johnson-Hopson C."/>
            <person name="Hsuan V.W."/>
            <person name="Iida K."/>
            <person name="Karnes M."/>
            <person name="Khan S."/>
            <person name="Koesema E."/>
            <person name="Ishida J."/>
            <person name="Jiang P.X."/>
            <person name="Jones T."/>
            <person name="Kawai J."/>
            <person name="Kamiya A."/>
            <person name="Meyers C."/>
            <person name="Nakajima M."/>
            <person name="Narusaka M."/>
            <person name="Seki M."/>
            <person name="Sakurai T."/>
            <person name="Satou M."/>
            <person name="Tamse R."/>
            <person name="Vaysberg M."/>
            <person name="Wallender E.K."/>
            <person name="Wong C."/>
            <person name="Yamamura Y."/>
            <person name="Yuan S."/>
            <person name="Shinozaki K."/>
            <person name="Davis R.W."/>
            <person name="Theologis A."/>
            <person name="Ecker J.R."/>
        </authorList>
    </citation>
    <scope>NUCLEOTIDE SEQUENCE [LARGE SCALE MRNA]</scope>
    <source>
        <strain>cv. Columbia</strain>
    </source>
</reference>
<reference key="5">
    <citation type="submission" date="2005-03" db="EMBL/GenBank/DDBJ databases">
        <title>Large-scale analysis of RIKEN Arabidopsis full-length (RAFL) cDNAs.</title>
        <authorList>
            <person name="Totoki Y."/>
            <person name="Seki M."/>
            <person name="Ishida J."/>
            <person name="Nakajima M."/>
            <person name="Enju A."/>
            <person name="Kamiya A."/>
            <person name="Narusaka M."/>
            <person name="Shin-i T."/>
            <person name="Nakagawa M."/>
            <person name="Sakamoto N."/>
            <person name="Oishi K."/>
            <person name="Kohara Y."/>
            <person name="Kobayashi M."/>
            <person name="Toyoda A."/>
            <person name="Sakaki Y."/>
            <person name="Sakurai T."/>
            <person name="Iida K."/>
            <person name="Akiyama K."/>
            <person name="Satou M."/>
            <person name="Toyoda T."/>
            <person name="Konagaya A."/>
            <person name="Carninci P."/>
            <person name="Kawai J."/>
            <person name="Hayashizaki Y."/>
            <person name="Shinozaki K."/>
        </authorList>
    </citation>
    <scope>NUCLEOTIDE SEQUENCE [LARGE SCALE MRNA]</scope>
    <source>
        <strain>cv. Columbia</strain>
    </source>
</reference>
<reference key="6">
    <citation type="submission" date="2002-03" db="EMBL/GenBank/DDBJ databases">
        <title>Full-length cDNA from Arabidopsis thaliana.</title>
        <authorList>
            <person name="Brover V.V."/>
            <person name="Troukhan M.E."/>
            <person name="Alexandrov N.A."/>
            <person name="Lu Y.-P."/>
            <person name="Flavell R.B."/>
            <person name="Feldmann K.A."/>
        </authorList>
    </citation>
    <scope>NUCLEOTIDE SEQUENCE [LARGE SCALE MRNA]</scope>
</reference>
<reference key="7">
    <citation type="journal article" date="2008" name="Plant Physiol.">
        <title>Global characterization of cell-specific gene expression through fluorescence-activated sorting of nuclei.</title>
        <authorList>
            <person name="Zhang C."/>
            <person name="Barthelson R.A."/>
            <person name="Lambert G.M."/>
            <person name="Galbraith D.W."/>
        </authorList>
    </citation>
    <scope>TISSUE SPECIFICITY</scope>
</reference>
<reference key="8">
    <citation type="journal article" date="2010" name="Plant Cell">
        <title>Arabidopsis NPCC6/NaKR1 is a phloem mobile metal binding protein necessary for phloem function and root meristem maintenance.</title>
        <authorList>
            <person name="Tian H."/>
            <person name="Baxter I.R."/>
            <person name="Lahner B."/>
            <person name="Reinders A."/>
            <person name="Salt D.E."/>
            <person name="Ward J.M."/>
        </authorList>
    </citation>
    <scope>FUNCTION</scope>
    <scope>MUTAGENESIS OF CYS-260 AND CYS-263</scope>
    <scope>GENE FAMILY</scope>
    <scope>NOMENCLATURE</scope>
    <scope>TISSUE SPECIFICITY</scope>
    <scope>SUBCELLULAR LOCATION</scope>
    <scope>DEVELOPMENTAL STAGE</scope>
    <scope>METAL BINDING</scope>
</reference>
<reference key="9">
    <citation type="journal article" date="2013" name="FEBS J.">
        <title>Heavy metal-associated isoprenylated plant protein (HIPP): characterization of a family of proteins exclusive to plants.</title>
        <authorList>
            <person name="de Abreu-Neto J.B."/>
            <person name="Turchetto-Zolet A.C."/>
            <person name="de Oliveira L.F."/>
            <person name="Zanettini M.H."/>
            <person name="Margis-Pinheiro M."/>
        </authorList>
    </citation>
    <scope>GENE FAMILY</scope>
    <scope>NOMENCLATURE</scope>
</reference>
<reference key="10">
    <citation type="journal article" date="2016" name="Nat. Plants">
        <title>NaKR1 regulates long-distance movement of FLOWERING LOCUS T in Arabidopsis.</title>
        <authorList>
            <person name="Zhu Y."/>
            <person name="Liu L."/>
            <person name="Shen L."/>
            <person name="Yu H."/>
        </authorList>
    </citation>
    <scope>FUNCTION</scope>
    <scope>INDUCTION</scope>
    <scope>INTERACTION WITH FT</scope>
    <scope>LACK OF INTERACTION WITH TSF</scope>
    <scope>TISSUE SPECIFICITY</scope>
    <scope>SUBCELLULAR LOCATION</scope>
</reference>
<keyword id="KW-0963">Cytoplasm</keyword>
<keyword id="KW-0256">Endoplasmic reticulum</keyword>
<keyword id="KW-0479">Metal-binding</keyword>
<keyword id="KW-0539">Nucleus</keyword>
<keyword id="KW-1185">Reference proteome</keyword>
<keyword id="KW-0862">Zinc</keyword>
<protein>
    <recommendedName>
        <fullName evidence="7">Protein SODIUM POTASSIUM ROOT DEFECTIVE 1</fullName>
        <shortName evidence="7">NaKR1</shortName>
    </recommendedName>
    <alternativeName>
        <fullName evidence="8">Heavy metal-associated plant protein 2</fullName>
        <shortName evidence="8">AtHPP02</shortName>
    </alternativeName>
    <alternativeName>
        <fullName evidence="6">Nuclear-enriched phloem companion cell gene 6</fullName>
        <shortName evidence="6">NPCC6</shortName>
    </alternativeName>
</protein>
<comment type="function">
    <text evidence="4 5">Required for root meristem maintenance after germination (PubMed:21193571). Involved in phloem translocation, starch accumulation and flowering (PubMed:21193571). Promotes flowering in the photoperiod pathway (PubMed:27255839). Regulates long-distance movement of FT from leaves to the shoot apex through the phloem stream (PubMed:27255839).</text>
</comment>
<comment type="subunit">
    <text evidence="5">Interacts with FT, but not with TSF (TWIN SISTER OF FT).</text>
</comment>
<comment type="subcellular location">
    <subcellularLocation>
        <location evidence="4">Cytoplasm</location>
    </subcellularLocation>
    <subcellularLocation>
        <location evidence="4 5">Nucleus</location>
    </subcellularLocation>
    <subcellularLocation>
        <location evidence="5">Endoplasmic reticulum</location>
    </subcellularLocation>
    <text evidence="4">Mobile through plasmodesmata.</text>
</comment>
<comment type="tissue specificity">
    <text evidence="3 4 5">Expressed in vascular tissues of cotyledons, rosette leaves and roots in developing seedlings before and during the floral transition (PubMed:27255839). Expressed specifically in the phloem companion cells (PubMed:18354040, PubMed:21193571). Not detected in embryos or seeds (PubMed:21193571). Not detected in the vegetative shoot apex (PubMed:27255839).</text>
</comment>
<comment type="developmental stage">
    <text evidence="4">Start to be expressed 1 day after germination (DAG) in the vascular tissue at the root-hypocotyl junction.</text>
</comment>
<comment type="induction">
    <text evidence="5">Circadian-regulation (PubMed:27255839). Up-regulated by CO in leaves in response to long days (PubMed:27255839).</text>
</comment>
<comment type="sequence caution" evidence="9">
    <conflict type="erroneous initiation">
        <sequence resource="EMBL-CDS" id="CAB85997"/>
    </conflict>
    <text>Truncated N-terminus.</text>
</comment>